<reference key="1">
    <citation type="submission" date="2006-08" db="EMBL/GenBank/DDBJ databases">
        <title>Complete sequence of Shewanella sp. MR-4.</title>
        <authorList>
            <consortium name="US DOE Joint Genome Institute"/>
            <person name="Copeland A."/>
            <person name="Lucas S."/>
            <person name="Lapidus A."/>
            <person name="Barry K."/>
            <person name="Detter J.C."/>
            <person name="Glavina del Rio T."/>
            <person name="Hammon N."/>
            <person name="Israni S."/>
            <person name="Dalin E."/>
            <person name="Tice H."/>
            <person name="Pitluck S."/>
            <person name="Kiss H."/>
            <person name="Brettin T."/>
            <person name="Bruce D."/>
            <person name="Han C."/>
            <person name="Tapia R."/>
            <person name="Gilna P."/>
            <person name="Schmutz J."/>
            <person name="Larimer F."/>
            <person name="Land M."/>
            <person name="Hauser L."/>
            <person name="Kyrpides N."/>
            <person name="Mikhailova N."/>
            <person name="Nealson K."/>
            <person name="Konstantinidis K."/>
            <person name="Klappenbach J."/>
            <person name="Tiedje J."/>
            <person name="Richardson P."/>
        </authorList>
    </citation>
    <scope>NUCLEOTIDE SEQUENCE [LARGE SCALE GENOMIC DNA]</scope>
    <source>
        <strain>MR-4</strain>
    </source>
</reference>
<evidence type="ECO:0000255" key="1">
    <source>
        <dbReference type="HAMAP-Rule" id="MF_00440"/>
    </source>
</evidence>
<protein>
    <recommendedName>
        <fullName evidence="1">Transcriptional repressor NrdR</fullName>
    </recommendedName>
</protein>
<gene>
    <name evidence="1" type="primary">nrdR</name>
    <name type="ordered locus">Shewmr4_1095</name>
</gene>
<comment type="function">
    <text evidence="1">Negatively regulates transcription of bacterial ribonucleotide reductase nrd genes and operons by binding to NrdR-boxes.</text>
</comment>
<comment type="cofactor">
    <cofactor evidence="1">
        <name>Zn(2+)</name>
        <dbReference type="ChEBI" id="CHEBI:29105"/>
    </cofactor>
    <text evidence="1">Binds 1 zinc ion.</text>
</comment>
<comment type="similarity">
    <text evidence="1">Belongs to the NrdR family.</text>
</comment>
<keyword id="KW-0067">ATP-binding</keyword>
<keyword id="KW-0238">DNA-binding</keyword>
<keyword id="KW-0479">Metal-binding</keyword>
<keyword id="KW-0547">Nucleotide-binding</keyword>
<keyword id="KW-0678">Repressor</keyword>
<keyword id="KW-0804">Transcription</keyword>
<keyword id="KW-0805">Transcription regulation</keyword>
<keyword id="KW-0862">Zinc</keyword>
<keyword id="KW-0863">Zinc-finger</keyword>
<proteinExistence type="inferred from homology"/>
<accession>Q0HL92</accession>
<dbReference type="EMBL" id="CP000446">
    <property type="protein sequence ID" value="ABI38175.1"/>
    <property type="molecule type" value="Genomic_DNA"/>
</dbReference>
<dbReference type="RefSeq" id="WP_011073317.1">
    <property type="nucleotide sequence ID" value="NC_008321.1"/>
</dbReference>
<dbReference type="SMR" id="Q0HL92"/>
<dbReference type="GeneID" id="94727094"/>
<dbReference type="KEGG" id="she:Shewmr4_1095"/>
<dbReference type="HOGENOM" id="CLU_108412_0_0_6"/>
<dbReference type="GO" id="GO:0005524">
    <property type="term" value="F:ATP binding"/>
    <property type="evidence" value="ECO:0007669"/>
    <property type="project" value="UniProtKB-KW"/>
</dbReference>
<dbReference type="GO" id="GO:0003677">
    <property type="term" value="F:DNA binding"/>
    <property type="evidence" value="ECO:0007669"/>
    <property type="project" value="UniProtKB-KW"/>
</dbReference>
<dbReference type="GO" id="GO:0008270">
    <property type="term" value="F:zinc ion binding"/>
    <property type="evidence" value="ECO:0007669"/>
    <property type="project" value="UniProtKB-UniRule"/>
</dbReference>
<dbReference type="GO" id="GO:0045892">
    <property type="term" value="P:negative regulation of DNA-templated transcription"/>
    <property type="evidence" value="ECO:0007669"/>
    <property type="project" value="UniProtKB-UniRule"/>
</dbReference>
<dbReference type="HAMAP" id="MF_00440">
    <property type="entry name" value="NrdR"/>
    <property type="match status" value="1"/>
</dbReference>
<dbReference type="InterPro" id="IPR005144">
    <property type="entry name" value="ATP-cone_dom"/>
</dbReference>
<dbReference type="InterPro" id="IPR055173">
    <property type="entry name" value="NrdR-like_N"/>
</dbReference>
<dbReference type="InterPro" id="IPR003796">
    <property type="entry name" value="RNR_NrdR-like"/>
</dbReference>
<dbReference type="NCBIfam" id="TIGR00244">
    <property type="entry name" value="transcriptional regulator NrdR"/>
    <property type="match status" value="1"/>
</dbReference>
<dbReference type="PANTHER" id="PTHR30455">
    <property type="entry name" value="TRANSCRIPTIONAL REPRESSOR NRDR"/>
    <property type="match status" value="1"/>
</dbReference>
<dbReference type="PANTHER" id="PTHR30455:SF2">
    <property type="entry name" value="TRANSCRIPTIONAL REPRESSOR NRDR"/>
    <property type="match status" value="1"/>
</dbReference>
<dbReference type="Pfam" id="PF03477">
    <property type="entry name" value="ATP-cone"/>
    <property type="match status" value="1"/>
</dbReference>
<dbReference type="Pfam" id="PF22811">
    <property type="entry name" value="Zn_ribbon_NrdR"/>
    <property type="match status" value="1"/>
</dbReference>
<dbReference type="PROSITE" id="PS51161">
    <property type="entry name" value="ATP_CONE"/>
    <property type="match status" value="1"/>
</dbReference>
<feature type="chain" id="PRO_0000264210" description="Transcriptional repressor NrdR">
    <location>
        <begin position="1"/>
        <end position="149"/>
    </location>
</feature>
<feature type="domain" description="ATP-cone" evidence="1">
    <location>
        <begin position="49"/>
        <end position="139"/>
    </location>
</feature>
<feature type="zinc finger region" evidence="1">
    <location>
        <begin position="3"/>
        <end position="34"/>
    </location>
</feature>
<organism>
    <name type="scientific">Shewanella sp. (strain MR-4)</name>
    <dbReference type="NCBI Taxonomy" id="60480"/>
    <lineage>
        <taxon>Bacteria</taxon>
        <taxon>Pseudomonadati</taxon>
        <taxon>Pseudomonadota</taxon>
        <taxon>Gammaproteobacteria</taxon>
        <taxon>Alteromonadales</taxon>
        <taxon>Shewanellaceae</taxon>
        <taxon>Shewanella</taxon>
    </lineage>
</organism>
<name>NRDR_SHESM</name>
<sequence length="149" mass="17102">MHCPFCSATDTKVIDSRLVAEGHQVRRRRECTECHERFTTFEGAELVMPRVIKRDGTRQPFDEEKLQAGMLRAVEKRPVSMDEIEQALSKIKSTLRATGEREVPSEMIGNLMMEQLMSLDKVAYIRFASVYRAFEDVSEFGEAIAKLQK</sequence>